<organism>
    <name type="scientific">Pseudomonas aeruginosa (strain LESB58)</name>
    <dbReference type="NCBI Taxonomy" id="557722"/>
    <lineage>
        <taxon>Bacteria</taxon>
        <taxon>Pseudomonadati</taxon>
        <taxon>Pseudomonadota</taxon>
        <taxon>Gammaproteobacteria</taxon>
        <taxon>Pseudomonadales</taxon>
        <taxon>Pseudomonadaceae</taxon>
        <taxon>Pseudomonas</taxon>
    </lineage>
</organism>
<sequence>MNTLLMHCRPGFEGEVCAEIAEHAATLEIPGYAKSKPASAHVEFVCQDADGAERLMRRLRFADLIFPRQWARGPGFIELPESQRIEVLLAELASYPVCGSLWLEVLDTNAGKEVSTFCRKFEKPLRAALVKAGRLQEDPALPRLLLTFRSGREVFVGLAEPRNSALWPMGIPRLKFPREAPSRSTLKLEEAWHQFIPRSEWDKRLAPDMLAVDLGAAPGGWTWQLVNREMRVTAVDNGPMAENLMYSGLVDHQKVDGYQYRPRQRVDWMVCDIVEKPARTGALIETWIGEGLCREAVVNLKLPMKQRYAEVRKILQRLRESFDARGLKVAIGCKQLYHDREEVTCHLRRLER</sequence>
<keyword id="KW-0963">Cytoplasm</keyword>
<keyword id="KW-0489">Methyltransferase</keyword>
<keyword id="KW-0698">rRNA processing</keyword>
<keyword id="KW-0949">S-adenosyl-L-methionine</keyword>
<keyword id="KW-0808">Transferase</keyword>
<dbReference type="EC" id="2.1.1.186" evidence="1"/>
<dbReference type="EMBL" id="FM209186">
    <property type="protein sequence ID" value="CAW28493.1"/>
    <property type="molecule type" value="Genomic_DNA"/>
</dbReference>
<dbReference type="RefSeq" id="WP_003087345.1">
    <property type="nucleotide sequence ID" value="NC_011770.1"/>
</dbReference>
<dbReference type="SMR" id="B7UVG0"/>
<dbReference type="KEGG" id="pag:PLES_37661"/>
<dbReference type="HOGENOM" id="CLU_043780_0_0_6"/>
<dbReference type="GO" id="GO:0005737">
    <property type="term" value="C:cytoplasm"/>
    <property type="evidence" value="ECO:0007669"/>
    <property type="project" value="UniProtKB-SubCell"/>
</dbReference>
<dbReference type="GO" id="GO:0008757">
    <property type="term" value="F:S-adenosylmethionine-dependent methyltransferase activity"/>
    <property type="evidence" value="ECO:0007669"/>
    <property type="project" value="UniProtKB-UniRule"/>
</dbReference>
<dbReference type="GO" id="GO:0032259">
    <property type="term" value="P:methylation"/>
    <property type="evidence" value="ECO:0007669"/>
    <property type="project" value="UniProtKB-KW"/>
</dbReference>
<dbReference type="GO" id="GO:0006364">
    <property type="term" value="P:rRNA processing"/>
    <property type="evidence" value="ECO:0007669"/>
    <property type="project" value="UniProtKB-UniRule"/>
</dbReference>
<dbReference type="Gene3D" id="3.30.2300.20">
    <property type="match status" value="1"/>
</dbReference>
<dbReference type="Gene3D" id="3.30.70.2810">
    <property type="match status" value="1"/>
</dbReference>
<dbReference type="Gene3D" id="3.40.50.150">
    <property type="entry name" value="Vaccinia Virus protein VP39"/>
    <property type="match status" value="1"/>
</dbReference>
<dbReference type="HAMAP" id="MF_01551">
    <property type="entry name" value="23SrRNA_methyltr_M"/>
    <property type="match status" value="1"/>
</dbReference>
<dbReference type="InterPro" id="IPR040739">
    <property type="entry name" value="RlmM_FDX"/>
</dbReference>
<dbReference type="InterPro" id="IPR048646">
    <property type="entry name" value="RlmM_THUMP-like"/>
</dbReference>
<dbReference type="InterPro" id="IPR002877">
    <property type="entry name" value="RNA_MeTrfase_FtsJ_dom"/>
</dbReference>
<dbReference type="InterPro" id="IPR011224">
    <property type="entry name" value="rRNA_MeTrfase_M"/>
</dbReference>
<dbReference type="InterPro" id="IPR029063">
    <property type="entry name" value="SAM-dependent_MTases_sf"/>
</dbReference>
<dbReference type="NCBIfam" id="NF008734">
    <property type="entry name" value="PRK11760.1"/>
    <property type="match status" value="1"/>
</dbReference>
<dbReference type="PANTHER" id="PTHR37524">
    <property type="entry name" value="RIBOSOMAL RNA LARGE SUBUNIT METHYLTRANSFERASE M"/>
    <property type="match status" value="1"/>
</dbReference>
<dbReference type="PANTHER" id="PTHR37524:SF2">
    <property type="entry name" value="RIBOSOMAL RNA METHYLTRANSFERASE FTSJ DOMAIN-CONTAINING PROTEIN"/>
    <property type="match status" value="1"/>
</dbReference>
<dbReference type="Pfam" id="PF01728">
    <property type="entry name" value="FtsJ"/>
    <property type="match status" value="1"/>
</dbReference>
<dbReference type="Pfam" id="PF18125">
    <property type="entry name" value="RlmM_FDX"/>
    <property type="match status" value="1"/>
</dbReference>
<dbReference type="Pfam" id="PF21239">
    <property type="entry name" value="RLMM_N"/>
    <property type="match status" value="1"/>
</dbReference>
<dbReference type="PIRSF" id="PIRSF028774">
    <property type="entry name" value="UCP028774"/>
    <property type="match status" value="1"/>
</dbReference>
<dbReference type="SUPFAM" id="SSF53335">
    <property type="entry name" value="S-adenosyl-L-methionine-dependent methyltransferases"/>
    <property type="match status" value="1"/>
</dbReference>
<protein>
    <recommendedName>
        <fullName evidence="1">Ribosomal RNA large subunit methyltransferase M</fullName>
        <ecNumber evidence="1">2.1.1.186</ecNumber>
    </recommendedName>
    <alternativeName>
        <fullName evidence="1">23S rRNA (cytidine2498-2'-O)-methyltransferase</fullName>
    </alternativeName>
    <alternativeName>
        <fullName evidence="1">23S rRNA 2'-O-ribose methyltransferase RlmM</fullName>
    </alternativeName>
</protein>
<feature type="chain" id="PRO_1000201523" description="Ribosomal RNA large subunit methyltransferase M">
    <location>
        <begin position="1"/>
        <end position="352"/>
    </location>
</feature>
<feature type="active site" description="Proton acceptor" evidence="1">
    <location>
        <position position="301"/>
    </location>
</feature>
<feature type="binding site" evidence="1">
    <location>
        <position position="184"/>
    </location>
    <ligand>
        <name>S-adenosyl-L-methionine</name>
        <dbReference type="ChEBI" id="CHEBI:59789"/>
    </ligand>
</feature>
<feature type="binding site" evidence="1">
    <location>
        <begin position="217"/>
        <end position="220"/>
    </location>
    <ligand>
        <name>S-adenosyl-L-methionine</name>
        <dbReference type="ChEBI" id="CHEBI:59789"/>
    </ligand>
</feature>
<feature type="binding site" evidence="1">
    <location>
        <position position="236"/>
    </location>
    <ligand>
        <name>S-adenosyl-L-methionine</name>
        <dbReference type="ChEBI" id="CHEBI:59789"/>
    </ligand>
</feature>
<feature type="binding site" evidence="1">
    <location>
        <position position="256"/>
    </location>
    <ligand>
        <name>S-adenosyl-L-methionine</name>
        <dbReference type="ChEBI" id="CHEBI:59789"/>
    </ligand>
</feature>
<feature type="binding site" evidence="1">
    <location>
        <position position="272"/>
    </location>
    <ligand>
        <name>S-adenosyl-L-methionine</name>
        <dbReference type="ChEBI" id="CHEBI:59789"/>
    </ligand>
</feature>
<reference key="1">
    <citation type="journal article" date="2009" name="Genome Res.">
        <title>Newly introduced genomic prophage islands are critical determinants of in vivo competitiveness in the Liverpool epidemic strain of Pseudomonas aeruginosa.</title>
        <authorList>
            <person name="Winstanley C."/>
            <person name="Langille M.G.I."/>
            <person name="Fothergill J.L."/>
            <person name="Kukavica-Ibrulj I."/>
            <person name="Paradis-Bleau C."/>
            <person name="Sanschagrin F."/>
            <person name="Thomson N.R."/>
            <person name="Winsor G.L."/>
            <person name="Quail M.A."/>
            <person name="Lennard N."/>
            <person name="Bignell A."/>
            <person name="Clarke L."/>
            <person name="Seeger K."/>
            <person name="Saunders D."/>
            <person name="Harris D."/>
            <person name="Parkhill J."/>
            <person name="Hancock R.E.W."/>
            <person name="Brinkman F.S.L."/>
            <person name="Levesque R.C."/>
        </authorList>
    </citation>
    <scope>NUCLEOTIDE SEQUENCE [LARGE SCALE GENOMIC DNA]</scope>
    <source>
        <strain>LESB58</strain>
    </source>
</reference>
<evidence type="ECO:0000255" key="1">
    <source>
        <dbReference type="HAMAP-Rule" id="MF_01551"/>
    </source>
</evidence>
<accession>B7UVG0</accession>
<name>RLMM_PSEA8</name>
<gene>
    <name evidence="1" type="primary">rlmM</name>
    <name type="ordered locus">PLES_37661</name>
</gene>
<proteinExistence type="inferred from homology"/>
<comment type="function">
    <text evidence="1">Catalyzes the 2'-O-methylation at nucleotide C2498 in 23S rRNA.</text>
</comment>
<comment type="catalytic activity">
    <reaction evidence="1">
        <text>cytidine(2498) in 23S rRNA + S-adenosyl-L-methionine = 2'-O-methylcytidine(2498) in 23S rRNA + S-adenosyl-L-homocysteine + H(+)</text>
        <dbReference type="Rhea" id="RHEA:42788"/>
        <dbReference type="Rhea" id="RHEA-COMP:10244"/>
        <dbReference type="Rhea" id="RHEA-COMP:10245"/>
        <dbReference type="ChEBI" id="CHEBI:15378"/>
        <dbReference type="ChEBI" id="CHEBI:57856"/>
        <dbReference type="ChEBI" id="CHEBI:59789"/>
        <dbReference type="ChEBI" id="CHEBI:74495"/>
        <dbReference type="ChEBI" id="CHEBI:82748"/>
        <dbReference type="EC" id="2.1.1.186"/>
    </reaction>
</comment>
<comment type="subunit">
    <text evidence="1">Monomer.</text>
</comment>
<comment type="subcellular location">
    <subcellularLocation>
        <location evidence="1">Cytoplasm</location>
    </subcellularLocation>
</comment>
<comment type="similarity">
    <text evidence="1">Belongs to the class I-like SAM-binding methyltransferase superfamily. RNA methyltransferase RlmE family. RlmM subfamily.</text>
</comment>